<reference key="1">
    <citation type="journal article" date="2002" name="Proc. Natl. Acad. Sci. U.S.A.">
        <title>Complete genome sequence and comparative genomic analysis of an emerging human pathogen, serotype V Streptococcus agalactiae.</title>
        <authorList>
            <person name="Tettelin H."/>
            <person name="Masignani V."/>
            <person name="Cieslewicz M.J."/>
            <person name="Eisen J.A."/>
            <person name="Peterson S.N."/>
            <person name="Wessels M.R."/>
            <person name="Paulsen I.T."/>
            <person name="Nelson K.E."/>
            <person name="Margarit I."/>
            <person name="Read T.D."/>
            <person name="Madoff L.C."/>
            <person name="Wolf A.M."/>
            <person name="Beanan M.J."/>
            <person name="Brinkac L.M."/>
            <person name="Daugherty S.C."/>
            <person name="DeBoy R.T."/>
            <person name="Durkin A.S."/>
            <person name="Kolonay J.F."/>
            <person name="Madupu R."/>
            <person name="Lewis M.R."/>
            <person name="Radune D."/>
            <person name="Fedorova N.B."/>
            <person name="Scanlan D."/>
            <person name="Khouri H.M."/>
            <person name="Mulligan S."/>
            <person name="Carty H.A."/>
            <person name="Cline R.T."/>
            <person name="Van Aken S.E."/>
            <person name="Gill J."/>
            <person name="Scarselli M."/>
            <person name="Mora M."/>
            <person name="Iacobini E.T."/>
            <person name="Brettoni C."/>
            <person name="Galli G."/>
            <person name="Mariani M."/>
            <person name="Vegni F."/>
            <person name="Maione D."/>
            <person name="Rinaudo D."/>
            <person name="Rappuoli R."/>
            <person name="Telford J.L."/>
            <person name="Kasper D.L."/>
            <person name="Grandi G."/>
            <person name="Fraser C.M."/>
        </authorList>
    </citation>
    <scope>NUCLEOTIDE SEQUENCE [LARGE SCALE GENOMIC DNA]</scope>
    <source>
        <strain>ATCC BAA-611 / 2603 V/R</strain>
    </source>
</reference>
<protein>
    <recommendedName>
        <fullName>Sensory transduction protein LytR</fullName>
    </recommendedName>
</protein>
<comment type="function">
    <text evidence="1">Member of the two-component regulatory system LytR/LytS that probably regulates genes involved in cell wall metabolism.</text>
</comment>
<comment type="subcellular location">
    <subcellularLocation>
        <location evidence="1">Cytoplasm</location>
    </subcellularLocation>
</comment>
<comment type="PTM">
    <text evidence="1">Phosphorylated by LytS.</text>
</comment>
<organism>
    <name type="scientific">Streptococcus agalactiae serotype V (strain ATCC BAA-611 / 2603 V/R)</name>
    <dbReference type="NCBI Taxonomy" id="208435"/>
    <lineage>
        <taxon>Bacteria</taxon>
        <taxon>Bacillati</taxon>
        <taxon>Bacillota</taxon>
        <taxon>Bacilli</taxon>
        <taxon>Lactobacillales</taxon>
        <taxon>Streptococcaceae</taxon>
        <taxon>Streptococcus</taxon>
    </lineage>
</organism>
<keyword id="KW-0963">Cytoplasm</keyword>
<keyword id="KW-0238">DNA-binding</keyword>
<keyword id="KW-0597">Phosphoprotein</keyword>
<keyword id="KW-1185">Reference proteome</keyword>
<keyword id="KW-0804">Transcription</keyword>
<keyword id="KW-0805">Transcription regulation</keyword>
<keyword id="KW-0902">Two-component regulatory system</keyword>
<dbReference type="EMBL" id="AE009948">
    <property type="protein sequence ID" value="AAM99090.1"/>
    <property type="molecule type" value="Genomic_DNA"/>
</dbReference>
<dbReference type="RefSeq" id="NP_687218.1">
    <property type="nucleotide sequence ID" value="NC_004116.1"/>
</dbReference>
<dbReference type="RefSeq" id="WP_000697630.1">
    <property type="nucleotide sequence ID" value="NC_004116.1"/>
</dbReference>
<dbReference type="SMR" id="Q8E217"/>
<dbReference type="STRING" id="208435.SAG0183"/>
<dbReference type="KEGG" id="sag:SAG0183"/>
<dbReference type="PATRIC" id="fig|208435.3.peg.183"/>
<dbReference type="HOGENOM" id="CLU_000445_14_1_9"/>
<dbReference type="OrthoDB" id="9809318at2"/>
<dbReference type="Proteomes" id="UP000000821">
    <property type="component" value="Chromosome"/>
</dbReference>
<dbReference type="GO" id="GO:0005737">
    <property type="term" value="C:cytoplasm"/>
    <property type="evidence" value="ECO:0007669"/>
    <property type="project" value="UniProtKB-SubCell"/>
</dbReference>
<dbReference type="GO" id="GO:0003677">
    <property type="term" value="F:DNA binding"/>
    <property type="evidence" value="ECO:0007669"/>
    <property type="project" value="UniProtKB-KW"/>
</dbReference>
<dbReference type="GO" id="GO:0000156">
    <property type="term" value="F:phosphorelay response regulator activity"/>
    <property type="evidence" value="ECO:0007669"/>
    <property type="project" value="InterPro"/>
</dbReference>
<dbReference type="CDD" id="cd17532">
    <property type="entry name" value="REC_LytTR_AlgR-like"/>
    <property type="match status" value="1"/>
</dbReference>
<dbReference type="Gene3D" id="2.20.25.10">
    <property type="match status" value="1"/>
</dbReference>
<dbReference type="Gene3D" id="2.40.50.40">
    <property type="match status" value="1"/>
</dbReference>
<dbReference type="Gene3D" id="3.40.50.2300">
    <property type="match status" value="1"/>
</dbReference>
<dbReference type="InterPro" id="IPR011006">
    <property type="entry name" value="CheY-like_superfamily"/>
</dbReference>
<dbReference type="InterPro" id="IPR046947">
    <property type="entry name" value="LytR-like"/>
</dbReference>
<dbReference type="InterPro" id="IPR007492">
    <property type="entry name" value="LytTR_DNA-bd_dom"/>
</dbReference>
<dbReference type="InterPro" id="IPR001789">
    <property type="entry name" value="Sig_transdc_resp-reg_receiver"/>
</dbReference>
<dbReference type="PANTHER" id="PTHR37299:SF1">
    <property type="entry name" value="STAGE 0 SPORULATION PROTEIN A HOMOLOG"/>
    <property type="match status" value="1"/>
</dbReference>
<dbReference type="PANTHER" id="PTHR37299">
    <property type="entry name" value="TRANSCRIPTIONAL REGULATOR-RELATED"/>
    <property type="match status" value="1"/>
</dbReference>
<dbReference type="Pfam" id="PF04397">
    <property type="entry name" value="LytTR"/>
    <property type="match status" value="1"/>
</dbReference>
<dbReference type="Pfam" id="PF00072">
    <property type="entry name" value="Response_reg"/>
    <property type="match status" value="1"/>
</dbReference>
<dbReference type="SMART" id="SM00850">
    <property type="entry name" value="LytTR"/>
    <property type="match status" value="1"/>
</dbReference>
<dbReference type="SMART" id="SM00448">
    <property type="entry name" value="REC"/>
    <property type="match status" value="1"/>
</dbReference>
<dbReference type="SUPFAM" id="SSF52172">
    <property type="entry name" value="CheY-like"/>
    <property type="match status" value="1"/>
</dbReference>
<dbReference type="PROSITE" id="PS50930">
    <property type="entry name" value="HTH_LYTTR"/>
    <property type="match status" value="1"/>
</dbReference>
<dbReference type="PROSITE" id="PS50110">
    <property type="entry name" value="RESPONSE_REGULATORY"/>
    <property type="match status" value="1"/>
</dbReference>
<sequence length="246" mass="28145">MKILILDDEMFARQELSFLVEHSQEVDNPEIFQAEDISEAEKILFRQQIDLIFLDISLSEENGFTLANQLSQLAHPPLVVFATAYDNYAVKAFESNAVDYIMKPFEQQRVDMALSKVKKLSQLTTASDVEQAIPKKASVELLTLTLSDRSVVVKMQDIVAASVEDGELTVSTVQKTYTIRKTLNWFKSRAVAPYFLQIHRNTVINLEMIEEIQPWFNHTLLLIMSNGEKFPVGRSYLKDLNEHLTM</sequence>
<name>LYTR_STRA5</name>
<evidence type="ECO:0000250" key="1"/>
<evidence type="ECO:0000255" key="2">
    <source>
        <dbReference type="PROSITE-ProRule" id="PRU00112"/>
    </source>
</evidence>
<evidence type="ECO:0000255" key="3">
    <source>
        <dbReference type="PROSITE-ProRule" id="PRU00169"/>
    </source>
</evidence>
<gene>
    <name type="primary">lytR</name>
    <name type="ordered locus">SAG0183</name>
</gene>
<accession>Q8E217</accession>
<feature type="chain" id="PRO_0000081136" description="Sensory transduction protein LytR">
    <location>
        <begin position="1"/>
        <end position="246"/>
    </location>
</feature>
<feature type="domain" description="Response regulatory" evidence="3">
    <location>
        <begin position="2"/>
        <end position="118"/>
    </location>
</feature>
<feature type="domain" description="HTH LytTR-type" evidence="2">
    <location>
        <begin position="142"/>
        <end position="246"/>
    </location>
</feature>
<feature type="modified residue" description="4-aspartylphosphate" evidence="3">
    <location>
        <position position="55"/>
    </location>
</feature>
<proteinExistence type="inferred from homology"/>